<keyword id="KW-0963">Cytoplasm</keyword>
<keyword id="KW-0238">DNA-binding</keyword>
<keyword id="KW-0804">Transcription</keyword>
<keyword id="KW-0805">Transcription regulation</keyword>
<protein>
    <recommendedName>
        <fullName evidence="1">Probable transcriptional regulatory protein A1S_1496</fullName>
    </recommendedName>
</protein>
<gene>
    <name type="ordered locus">A1S_1496</name>
</gene>
<proteinExistence type="inferred from homology"/>
<feature type="chain" id="PRO_1000132139" description="Probable transcriptional regulatory protein A1S_1496">
    <location>
        <begin position="1"/>
        <end position="249"/>
    </location>
</feature>
<dbReference type="EMBL" id="CP000521">
    <property type="protein sequence ID" value="ABO11924.2"/>
    <property type="molecule type" value="Genomic_DNA"/>
</dbReference>
<dbReference type="RefSeq" id="WP_000907229.1">
    <property type="nucleotide sequence ID" value="NZ_CP053098.1"/>
</dbReference>
<dbReference type="SMR" id="A3M4T0"/>
<dbReference type="KEGG" id="acb:A1S_1496"/>
<dbReference type="HOGENOM" id="CLU_062974_2_2_6"/>
<dbReference type="GO" id="GO:0005829">
    <property type="term" value="C:cytosol"/>
    <property type="evidence" value="ECO:0007669"/>
    <property type="project" value="TreeGrafter"/>
</dbReference>
<dbReference type="GO" id="GO:0003677">
    <property type="term" value="F:DNA binding"/>
    <property type="evidence" value="ECO:0007669"/>
    <property type="project" value="UniProtKB-UniRule"/>
</dbReference>
<dbReference type="GO" id="GO:0006355">
    <property type="term" value="P:regulation of DNA-templated transcription"/>
    <property type="evidence" value="ECO:0007669"/>
    <property type="project" value="UniProtKB-UniRule"/>
</dbReference>
<dbReference type="FunFam" id="1.10.10.200:FF:000001">
    <property type="entry name" value="Probable transcriptional regulatory protein YebC"/>
    <property type="match status" value="1"/>
</dbReference>
<dbReference type="FunFam" id="3.30.70.980:FF:000002">
    <property type="entry name" value="Probable transcriptional regulatory protein YebC"/>
    <property type="match status" value="1"/>
</dbReference>
<dbReference type="Gene3D" id="1.10.10.200">
    <property type="match status" value="1"/>
</dbReference>
<dbReference type="Gene3D" id="3.30.70.980">
    <property type="match status" value="2"/>
</dbReference>
<dbReference type="HAMAP" id="MF_00693">
    <property type="entry name" value="Transcrip_reg_TACO1"/>
    <property type="match status" value="1"/>
</dbReference>
<dbReference type="InterPro" id="IPR017856">
    <property type="entry name" value="Integrase-like_N"/>
</dbReference>
<dbReference type="InterPro" id="IPR048300">
    <property type="entry name" value="TACO1_YebC-like_2nd/3rd_dom"/>
</dbReference>
<dbReference type="InterPro" id="IPR049083">
    <property type="entry name" value="TACO1_YebC_N"/>
</dbReference>
<dbReference type="InterPro" id="IPR002876">
    <property type="entry name" value="Transcrip_reg_TACO1-like"/>
</dbReference>
<dbReference type="InterPro" id="IPR026564">
    <property type="entry name" value="Transcrip_reg_TACO1-like_dom3"/>
</dbReference>
<dbReference type="InterPro" id="IPR029072">
    <property type="entry name" value="YebC-like"/>
</dbReference>
<dbReference type="NCBIfam" id="NF001030">
    <property type="entry name" value="PRK00110.1"/>
    <property type="match status" value="1"/>
</dbReference>
<dbReference type="NCBIfam" id="NF009044">
    <property type="entry name" value="PRK12378.1"/>
    <property type="match status" value="1"/>
</dbReference>
<dbReference type="NCBIfam" id="TIGR01033">
    <property type="entry name" value="YebC/PmpR family DNA-binding transcriptional regulator"/>
    <property type="match status" value="1"/>
</dbReference>
<dbReference type="PANTHER" id="PTHR12532:SF6">
    <property type="entry name" value="TRANSCRIPTIONAL REGULATORY PROTEIN YEBC-RELATED"/>
    <property type="match status" value="1"/>
</dbReference>
<dbReference type="PANTHER" id="PTHR12532">
    <property type="entry name" value="TRANSLATIONAL ACTIVATOR OF CYTOCHROME C OXIDASE 1"/>
    <property type="match status" value="1"/>
</dbReference>
<dbReference type="Pfam" id="PF20772">
    <property type="entry name" value="TACO1_YebC_N"/>
    <property type="match status" value="1"/>
</dbReference>
<dbReference type="Pfam" id="PF01709">
    <property type="entry name" value="Transcrip_reg"/>
    <property type="match status" value="1"/>
</dbReference>
<dbReference type="SUPFAM" id="SSF75625">
    <property type="entry name" value="YebC-like"/>
    <property type="match status" value="1"/>
</dbReference>
<evidence type="ECO:0000255" key="1">
    <source>
        <dbReference type="HAMAP-Rule" id="MF_00693"/>
    </source>
</evidence>
<accession>A3M4T0</accession>
<organism>
    <name type="scientific">Acinetobacter baumannii (strain ATCC 17978 / DSM 105126 / CIP 53.77 / LMG 1025 / NCDC KC755 / 5377)</name>
    <dbReference type="NCBI Taxonomy" id="400667"/>
    <lineage>
        <taxon>Bacteria</taxon>
        <taxon>Pseudomonadati</taxon>
        <taxon>Pseudomonadota</taxon>
        <taxon>Gammaproteobacteria</taxon>
        <taxon>Moraxellales</taxon>
        <taxon>Moraxellaceae</taxon>
        <taxon>Acinetobacter</taxon>
        <taxon>Acinetobacter calcoaceticus/baumannii complex</taxon>
    </lineage>
</organism>
<comment type="subcellular location">
    <subcellularLocation>
        <location evidence="1">Cytoplasm</location>
    </subcellularLocation>
</comment>
<comment type="similarity">
    <text evidence="1">Belongs to the TACO1 family.</text>
</comment>
<sequence>MAGHSKWANIKHRKAKQDASRGKVFTKYIREIVTAAKLGGADPASNPRLRAVVEKALSVNMTRDTINRAIQRGVGGEDNDDLKEVTYEGYGVGGVAVLVETMTDNLNRTVPDVRHCFSKTNGNLGTAGSVAYLFTKRGEITFDDISLEDKIMDVALEAGAEDIEVSEDEILVITSPETFGEVQDALAAAGLKSDNAEVVMSPSTKAEITDIDQAKQVMKLIDMLEDLDDVQNVYTNVEFSDEVLAQLDA</sequence>
<reference key="1">
    <citation type="journal article" date="2007" name="Genes Dev.">
        <title>New insights into Acinetobacter baumannii pathogenesis revealed by high-density pyrosequencing and transposon mutagenesis.</title>
        <authorList>
            <person name="Smith M.G."/>
            <person name="Gianoulis T.A."/>
            <person name="Pukatzki S."/>
            <person name="Mekalanos J.J."/>
            <person name="Ornston L.N."/>
            <person name="Gerstein M."/>
            <person name="Snyder M."/>
        </authorList>
    </citation>
    <scope>NUCLEOTIDE SEQUENCE [LARGE SCALE GENOMIC DNA]</scope>
    <source>
        <strain>ATCC 17978 / DSM 105126 / CIP 53.77 / LMG 1025 / NCDC KC755 / 5377</strain>
    </source>
</reference>
<name>Y1496_ACIBT</name>